<keyword id="KW-0687">Ribonucleoprotein</keyword>
<keyword id="KW-0689">Ribosomal protein</keyword>
<keyword id="KW-0694">RNA-binding</keyword>
<keyword id="KW-0699">rRNA-binding</keyword>
<name>RL14_PROMP</name>
<organism>
    <name type="scientific">Prochlorococcus marinus subsp. pastoris (strain CCMP1986 / NIES-2087 / MED4)</name>
    <dbReference type="NCBI Taxonomy" id="59919"/>
    <lineage>
        <taxon>Bacteria</taxon>
        <taxon>Bacillati</taxon>
        <taxon>Cyanobacteriota</taxon>
        <taxon>Cyanophyceae</taxon>
        <taxon>Synechococcales</taxon>
        <taxon>Prochlorococcaceae</taxon>
        <taxon>Prochlorococcus</taxon>
    </lineage>
</organism>
<proteinExistence type="inferred from homology"/>
<protein>
    <recommendedName>
        <fullName evidence="1">Large ribosomal subunit protein uL14</fullName>
    </recommendedName>
    <alternativeName>
        <fullName evidence="2">50S ribosomal protein L14</fullName>
    </alternativeName>
</protein>
<evidence type="ECO:0000255" key="1">
    <source>
        <dbReference type="HAMAP-Rule" id="MF_01367"/>
    </source>
</evidence>
<evidence type="ECO:0000305" key="2"/>
<dbReference type="EMBL" id="BX548174">
    <property type="protein sequence ID" value="CAE20007.1"/>
    <property type="molecule type" value="Genomic_DNA"/>
</dbReference>
<dbReference type="RefSeq" id="WP_011133176.1">
    <property type="nucleotide sequence ID" value="NC_005072.1"/>
</dbReference>
<dbReference type="SMR" id="Q7TU29"/>
<dbReference type="STRING" id="59919.PMM1548"/>
<dbReference type="GeneID" id="60200770"/>
<dbReference type="KEGG" id="pmm:PMM1548"/>
<dbReference type="eggNOG" id="COG0093">
    <property type="taxonomic scope" value="Bacteria"/>
</dbReference>
<dbReference type="HOGENOM" id="CLU_095071_2_1_3"/>
<dbReference type="OrthoDB" id="9806379at2"/>
<dbReference type="Proteomes" id="UP000001026">
    <property type="component" value="Chromosome"/>
</dbReference>
<dbReference type="GO" id="GO:0022625">
    <property type="term" value="C:cytosolic large ribosomal subunit"/>
    <property type="evidence" value="ECO:0007669"/>
    <property type="project" value="TreeGrafter"/>
</dbReference>
<dbReference type="GO" id="GO:0070180">
    <property type="term" value="F:large ribosomal subunit rRNA binding"/>
    <property type="evidence" value="ECO:0007669"/>
    <property type="project" value="TreeGrafter"/>
</dbReference>
<dbReference type="GO" id="GO:0003735">
    <property type="term" value="F:structural constituent of ribosome"/>
    <property type="evidence" value="ECO:0007669"/>
    <property type="project" value="InterPro"/>
</dbReference>
<dbReference type="GO" id="GO:0006412">
    <property type="term" value="P:translation"/>
    <property type="evidence" value="ECO:0007669"/>
    <property type="project" value="UniProtKB-UniRule"/>
</dbReference>
<dbReference type="CDD" id="cd00337">
    <property type="entry name" value="Ribosomal_uL14"/>
    <property type="match status" value="1"/>
</dbReference>
<dbReference type="FunFam" id="2.40.150.20:FF:000001">
    <property type="entry name" value="50S ribosomal protein L14"/>
    <property type="match status" value="1"/>
</dbReference>
<dbReference type="Gene3D" id="2.40.150.20">
    <property type="entry name" value="Ribosomal protein L14"/>
    <property type="match status" value="1"/>
</dbReference>
<dbReference type="HAMAP" id="MF_01367">
    <property type="entry name" value="Ribosomal_uL14"/>
    <property type="match status" value="1"/>
</dbReference>
<dbReference type="InterPro" id="IPR000218">
    <property type="entry name" value="Ribosomal_uL14"/>
</dbReference>
<dbReference type="InterPro" id="IPR005745">
    <property type="entry name" value="Ribosomal_uL14_bac-type"/>
</dbReference>
<dbReference type="InterPro" id="IPR036853">
    <property type="entry name" value="Ribosomal_uL14_sf"/>
</dbReference>
<dbReference type="NCBIfam" id="TIGR01067">
    <property type="entry name" value="rplN_bact"/>
    <property type="match status" value="1"/>
</dbReference>
<dbReference type="PANTHER" id="PTHR11761">
    <property type="entry name" value="50S/60S RIBOSOMAL PROTEIN L14/L23"/>
    <property type="match status" value="1"/>
</dbReference>
<dbReference type="PANTHER" id="PTHR11761:SF3">
    <property type="entry name" value="LARGE RIBOSOMAL SUBUNIT PROTEIN UL14M"/>
    <property type="match status" value="1"/>
</dbReference>
<dbReference type="Pfam" id="PF00238">
    <property type="entry name" value="Ribosomal_L14"/>
    <property type="match status" value="1"/>
</dbReference>
<dbReference type="SMART" id="SM01374">
    <property type="entry name" value="Ribosomal_L14"/>
    <property type="match status" value="1"/>
</dbReference>
<dbReference type="SUPFAM" id="SSF50193">
    <property type="entry name" value="Ribosomal protein L14"/>
    <property type="match status" value="1"/>
</dbReference>
<reference key="1">
    <citation type="journal article" date="2003" name="Nature">
        <title>Genome divergence in two Prochlorococcus ecotypes reflects oceanic niche differentiation.</title>
        <authorList>
            <person name="Rocap G."/>
            <person name="Larimer F.W."/>
            <person name="Lamerdin J.E."/>
            <person name="Malfatti S."/>
            <person name="Chain P."/>
            <person name="Ahlgren N.A."/>
            <person name="Arellano A."/>
            <person name="Coleman M."/>
            <person name="Hauser L."/>
            <person name="Hess W.R."/>
            <person name="Johnson Z.I."/>
            <person name="Land M.L."/>
            <person name="Lindell D."/>
            <person name="Post A.F."/>
            <person name="Regala W."/>
            <person name="Shah M."/>
            <person name="Shaw S.L."/>
            <person name="Steglich C."/>
            <person name="Sullivan M.B."/>
            <person name="Ting C.S."/>
            <person name="Tolonen A."/>
            <person name="Webb E.A."/>
            <person name="Zinser E.R."/>
            <person name="Chisholm S.W."/>
        </authorList>
    </citation>
    <scope>NUCLEOTIDE SEQUENCE [LARGE SCALE GENOMIC DNA]</scope>
    <source>
        <strain>CCMP1986 / NIES-2087 / MED4</strain>
    </source>
</reference>
<accession>Q7TU29</accession>
<gene>
    <name evidence="1" type="primary">rplN</name>
    <name evidence="1" type="synonym">rpl14</name>
    <name type="ordered locus">PMM1548</name>
</gene>
<sequence length="121" mass="13413">MIQQETYLTVADNSGAKRLQCIRVLGSNRRYAHVGDVVVASVKDALPNMGVKKSDVVKAVIVRTRHTLRRNTGNSIRFDDNAAVLINEDKNPKGTRVFGPVARELRDKNFTKIVSLAPEVI</sequence>
<comment type="function">
    <text evidence="1">Binds to 23S rRNA. Forms part of two intersubunit bridges in the 70S ribosome.</text>
</comment>
<comment type="subunit">
    <text evidence="1">Part of the 50S ribosomal subunit. Forms a cluster with proteins L3 and L19. In the 70S ribosome, L14 and L19 interact and together make contacts with the 16S rRNA in bridges B5 and B8.</text>
</comment>
<comment type="similarity">
    <text evidence="1">Belongs to the universal ribosomal protein uL14 family.</text>
</comment>
<feature type="chain" id="PRO_0000266522" description="Large ribosomal subunit protein uL14">
    <location>
        <begin position="1"/>
        <end position="121"/>
    </location>
</feature>